<comment type="function">
    <text evidence="1">Specifically methylates position 2 of adenine 2503 in 23S rRNA and position 2 of adenine 37 in tRNAs. m2A2503 modification seems to play a crucial role in the proofreading step occurring at the peptidyl transferase center and thus would serve to optimize ribosomal fidelity.</text>
</comment>
<comment type="catalytic activity">
    <reaction evidence="1">
        <text>adenosine(2503) in 23S rRNA + 2 reduced [2Fe-2S]-[ferredoxin] + 2 S-adenosyl-L-methionine = 2-methyladenosine(2503) in 23S rRNA + 5'-deoxyadenosine + L-methionine + 2 oxidized [2Fe-2S]-[ferredoxin] + S-adenosyl-L-homocysteine</text>
        <dbReference type="Rhea" id="RHEA:42916"/>
        <dbReference type="Rhea" id="RHEA-COMP:10000"/>
        <dbReference type="Rhea" id="RHEA-COMP:10001"/>
        <dbReference type="Rhea" id="RHEA-COMP:10152"/>
        <dbReference type="Rhea" id="RHEA-COMP:10282"/>
        <dbReference type="ChEBI" id="CHEBI:17319"/>
        <dbReference type="ChEBI" id="CHEBI:33737"/>
        <dbReference type="ChEBI" id="CHEBI:33738"/>
        <dbReference type="ChEBI" id="CHEBI:57844"/>
        <dbReference type="ChEBI" id="CHEBI:57856"/>
        <dbReference type="ChEBI" id="CHEBI:59789"/>
        <dbReference type="ChEBI" id="CHEBI:74411"/>
        <dbReference type="ChEBI" id="CHEBI:74497"/>
        <dbReference type="EC" id="2.1.1.192"/>
    </reaction>
</comment>
<comment type="catalytic activity">
    <reaction evidence="1">
        <text>adenosine(37) in tRNA + 2 reduced [2Fe-2S]-[ferredoxin] + 2 S-adenosyl-L-methionine = 2-methyladenosine(37) in tRNA + 5'-deoxyadenosine + L-methionine + 2 oxidized [2Fe-2S]-[ferredoxin] + S-adenosyl-L-homocysteine</text>
        <dbReference type="Rhea" id="RHEA:43332"/>
        <dbReference type="Rhea" id="RHEA-COMP:10000"/>
        <dbReference type="Rhea" id="RHEA-COMP:10001"/>
        <dbReference type="Rhea" id="RHEA-COMP:10162"/>
        <dbReference type="Rhea" id="RHEA-COMP:10485"/>
        <dbReference type="ChEBI" id="CHEBI:17319"/>
        <dbReference type="ChEBI" id="CHEBI:33737"/>
        <dbReference type="ChEBI" id="CHEBI:33738"/>
        <dbReference type="ChEBI" id="CHEBI:57844"/>
        <dbReference type="ChEBI" id="CHEBI:57856"/>
        <dbReference type="ChEBI" id="CHEBI:59789"/>
        <dbReference type="ChEBI" id="CHEBI:74411"/>
        <dbReference type="ChEBI" id="CHEBI:74497"/>
        <dbReference type="EC" id="2.1.1.192"/>
    </reaction>
</comment>
<comment type="cofactor">
    <cofactor evidence="1">
        <name>[4Fe-4S] cluster</name>
        <dbReference type="ChEBI" id="CHEBI:49883"/>
    </cofactor>
    <text evidence="1">Binds 1 [4Fe-4S] cluster. The cluster is coordinated with 3 cysteines and an exchangeable S-adenosyl-L-methionine.</text>
</comment>
<comment type="subcellular location">
    <subcellularLocation>
        <location evidence="1">Cytoplasm</location>
    </subcellularLocation>
</comment>
<comment type="miscellaneous">
    <text evidence="1">Reaction proceeds by a ping-pong mechanism involving intermediate methylation of a conserved cysteine residue.</text>
</comment>
<comment type="similarity">
    <text evidence="1">Belongs to the radical SAM superfamily. RlmN family.</text>
</comment>
<gene>
    <name evidence="1" type="primary">rlmN</name>
    <name type="ordered locus">RD1_0192</name>
</gene>
<accession>Q16DM2</accession>
<organism>
    <name type="scientific">Roseobacter denitrificans (strain ATCC 33942 / OCh 114)</name>
    <name type="common">Erythrobacter sp. (strain OCh 114)</name>
    <name type="synonym">Roseobacter denitrificans</name>
    <dbReference type="NCBI Taxonomy" id="375451"/>
    <lineage>
        <taxon>Bacteria</taxon>
        <taxon>Pseudomonadati</taxon>
        <taxon>Pseudomonadota</taxon>
        <taxon>Alphaproteobacteria</taxon>
        <taxon>Rhodobacterales</taxon>
        <taxon>Roseobacteraceae</taxon>
        <taxon>Roseobacter</taxon>
    </lineage>
</organism>
<evidence type="ECO:0000255" key="1">
    <source>
        <dbReference type="HAMAP-Rule" id="MF_01849"/>
    </source>
</evidence>
<evidence type="ECO:0000255" key="2">
    <source>
        <dbReference type="PROSITE-ProRule" id="PRU01266"/>
    </source>
</evidence>
<protein>
    <recommendedName>
        <fullName evidence="1">Dual-specificity RNA methyltransferase RlmN</fullName>
        <ecNumber evidence="1">2.1.1.192</ecNumber>
    </recommendedName>
    <alternativeName>
        <fullName evidence="1">23S rRNA (adenine(2503)-C(2))-methyltransferase</fullName>
    </alternativeName>
    <alternativeName>
        <fullName evidence="1">23S rRNA m2A2503 methyltransferase</fullName>
    </alternativeName>
    <alternativeName>
        <fullName evidence="1">Ribosomal RNA large subunit methyltransferase N</fullName>
    </alternativeName>
    <alternativeName>
        <fullName evidence="1">tRNA (adenine(37)-C(2))-methyltransferase</fullName>
    </alternativeName>
    <alternativeName>
        <fullName evidence="1">tRNA m2A37 methyltransferase</fullName>
    </alternativeName>
</protein>
<name>RLMN_ROSDO</name>
<keyword id="KW-0004">4Fe-4S</keyword>
<keyword id="KW-0963">Cytoplasm</keyword>
<keyword id="KW-1015">Disulfide bond</keyword>
<keyword id="KW-0408">Iron</keyword>
<keyword id="KW-0411">Iron-sulfur</keyword>
<keyword id="KW-0479">Metal-binding</keyword>
<keyword id="KW-0489">Methyltransferase</keyword>
<keyword id="KW-1185">Reference proteome</keyword>
<keyword id="KW-0698">rRNA processing</keyword>
<keyword id="KW-0949">S-adenosyl-L-methionine</keyword>
<keyword id="KW-0808">Transferase</keyword>
<keyword id="KW-0819">tRNA processing</keyword>
<proteinExistence type="inferred from homology"/>
<feature type="chain" id="PRO_0000350377" description="Dual-specificity RNA methyltransferase RlmN">
    <location>
        <begin position="1"/>
        <end position="394"/>
    </location>
</feature>
<feature type="domain" description="Radical SAM core" evidence="2">
    <location>
        <begin position="121"/>
        <end position="363"/>
    </location>
</feature>
<feature type="active site" description="Proton acceptor" evidence="1">
    <location>
        <position position="115"/>
    </location>
</feature>
<feature type="active site" description="S-methylcysteine intermediate" evidence="1">
    <location>
        <position position="368"/>
    </location>
</feature>
<feature type="binding site" evidence="1">
    <location>
        <position position="135"/>
    </location>
    <ligand>
        <name>[4Fe-4S] cluster</name>
        <dbReference type="ChEBI" id="CHEBI:49883"/>
        <note>4Fe-4S-S-AdoMet</note>
    </ligand>
</feature>
<feature type="binding site" evidence="1">
    <location>
        <position position="139"/>
    </location>
    <ligand>
        <name>[4Fe-4S] cluster</name>
        <dbReference type="ChEBI" id="CHEBI:49883"/>
        <note>4Fe-4S-S-AdoMet</note>
    </ligand>
</feature>
<feature type="binding site" evidence="1">
    <location>
        <position position="142"/>
    </location>
    <ligand>
        <name>[4Fe-4S] cluster</name>
        <dbReference type="ChEBI" id="CHEBI:49883"/>
        <note>4Fe-4S-S-AdoMet</note>
    </ligand>
</feature>
<feature type="binding site" evidence="1">
    <location>
        <begin position="194"/>
        <end position="195"/>
    </location>
    <ligand>
        <name>S-adenosyl-L-methionine</name>
        <dbReference type="ChEBI" id="CHEBI:59789"/>
    </ligand>
</feature>
<feature type="binding site" evidence="1">
    <location>
        <position position="226"/>
    </location>
    <ligand>
        <name>S-adenosyl-L-methionine</name>
        <dbReference type="ChEBI" id="CHEBI:59789"/>
    </ligand>
</feature>
<feature type="binding site" evidence="1">
    <location>
        <begin position="248"/>
        <end position="250"/>
    </location>
    <ligand>
        <name>S-adenosyl-L-methionine</name>
        <dbReference type="ChEBI" id="CHEBI:59789"/>
    </ligand>
</feature>
<feature type="binding site" evidence="1">
    <location>
        <position position="325"/>
    </location>
    <ligand>
        <name>S-adenosyl-L-methionine</name>
        <dbReference type="ChEBI" id="CHEBI:59789"/>
    </ligand>
</feature>
<feature type="disulfide bond" description="(transient)" evidence="1">
    <location>
        <begin position="128"/>
        <end position="368"/>
    </location>
</feature>
<dbReference type="EC" id="2.1.1.192" evidence="1"/>
<dbReference type="EMBL" id="CP000362">
    <property type="protein sequence ID" value="ABG29921.1"/>
    <property type="molecule type" value="Genomic_DNA"/>
</dbReference>
<dbReference type="RefSeq" id="WP_011566543.1">
    <property type="nucleotide sequence ID" value="NC_008209.1"/>
</dbReference>
<dbReference type="SMR" id="Q16DM2"/>
<dbReference type="STRING" id="375451.RD1_0192"/>
<dbReference type="KEGG" id="rde:RD1_0192"/>
<dbReference type="eggNOG" id="COG0820">
    <property type="taxonomic scope" value="Bacteria"/>
</dbReference>
<dbReference type="HOGENOM" id="CLU_029101_0_0_5"/>
<dbReference type="OrthoDB" id="9793973at2"/>
<dbReference type="Proteomes" id="UP000007029">
    <property type="component" value="Chromosome"/>
</dbReference>
<dbReference type="GO" id="GO:0005737">
    <property type="term" value="C:cytoplasm"/>
    <property type="evidence" value="ECO:0007669"/>
    <property type="project" value="UniProtKB-SubCell"/>
</dbReference>
<dbReference type="GO" id="GO:0051539">
    <property type="term" value="F:4 iron, 4 sulfur cluster binding"/>
    <property type="evidence" value="ECO:0007669"/>
    <property type="project" value="UniProtKB-UniRule"/>
</dbReference>
<dbReference type="GO" id="GO:0046872">
    <property type="term" value="F:metal ion binding"/>
    <property type="evidence" value="ECO:0007669"/>
    <property type="project" value="UniProtKB-KW"/>
</dbReference>
<dbReference type="GO" id="GO:0070040">
    <property type="term" value="F:rRNA (adenine(2503)-C2-)-methyltransferase activity"/>
    <property type="evidence" value="ECO:0007669"/>
    <property type="project" value="UniProtKB-UniRule"/>
</dbReference>
<dbReference type="GO" id="GO:0019843">
    <property type="term" value="F:rRNA binding"/>
    <property type="evidence" value="ECO:0007669"/>
    <property type="project" value="UniProtKB-UniRule"/>
</dbReference>
<dbReference type="GO" id="GO:0002935">
    <property type="term" value="F:tRNA (adenine(37)-C2)-methyltransferase activity"/>
    <property type="evidence" value="ECO:0007669"/>
    <property type="project" value="UniProtKB-UniRule"/>
</dbReference>
<dbReference type="GO" id="GO:0000049">
    <property type="term" value="F:tRNA binding"/>
    <property type="evidence" value="ECO:0007669"/>
    <property type="project" value="UniProtKB-UniRule"/>
</dbReference>
<dbReference type="GO" id="GO:0070475">
    <property type="term" value="P:rRNA base methylation"/>
    <property type="evidence" value="ECO:0007669"/>
    <property type="project" value="UniProtKB-UniRule"/>
</dbReference>
<dbReference type="GO" id="GO:0030488">
    <property type="term" value="P:tRNA methylation"/>
    <property type="evidence" value="ECO:0007669"/>
    <property type="project" value="UniProtKB-UniRule"/>
</dbReference>
<dbReference type="CDD" id="cd01335">
    <property type="entry name" value="Radical_SAM"/>
    <property type="match status" value="1"/>
</dbReference>
<dbReference type="FunFam" id="3.20.20.70:FF:000008">
    <property type="entry name" value="Dual-specificity RNA methyltransferase RlmN"/>
    <property type="match status" value="1"/>
</dbReference>
<dbReference type="Gene3D" id="1.10.150.530">
    <property type="match status" value="1"/>
</dbReference>
<dbReference type="Gene3D" id="3.20.20.70">
    <property type="entry name" value="Aldolase class I"/>
    <property type="match status" value="1"/>
</dbReference>
<dbReference type="HAMAP" id="MF_01849">
    <property type="entry name" value="RNA_methyltr_RlmN"/>
    <property type="match status" value="1"/>
</dbReference>
<dbReference type="InterPro" id="IPR013785">
    <property type="entry name" value="Aldolase_TIM"/>
</dbReference>
<dbReference type="InterPro" id="IPR040072">
    <property type="entry name" value="Methyltransferase_A"/>
</dbReference>
<dbReference type="InterPro" id="IPR048641">
    <property type="entry name" value="RlmN_N"/>
</dbReference>
<dbReference type="InterPro" id="IPR027492">
    <property type="entry name" value="RNA_MTrfase_RlmN"/>
</dbReference>
<dbReference type="InterPro" id="IPR004383">
    <property type="entry name" value="rRNA_lsu_MTrfase_RlmN/Cfr"/>
</dbReference>
<dbReference type="InterPro" id="IPR007197">
    <property type="entry name" value="rSAM"/>
</dbReference>
<dbReference type="NCBIfam" id="TIGR00048">
    <property type="entry name" value="rRNA_mod_RlmN"/>
    <property type="match status" value="1"/>
</dbReference>
<dbReference type="PANTHER" id="PTHR30544">
    <property type="entry name" value="23S RRNA METHYLTRANSFERASE"/>
    <property type="match status" value="1"/>
</dbReference>
<dbReference type="PANTHER" id="PTHR30544:SF5">
    <property type="entry name" value="RADICAL SAM CORE DOMAIN-CONTAINING PROTEIN"/>
    <property type="match status" value="1"/>
</dbReference>
<dbReference type="Pfam" id="PF04055">
    <property type="entry name" value="Radical_SAM"/>
    <property type="match status" value="1"/>
</dbReference>
<dbReference type="Pfam" id="PF21016">
    <property type="entry name" value="RlmN_N"/>
    <property type="match status" value="1"/>
</dbReference>
<dbReference type="PIRSF" id="PIRSF006004">
    <property type="entry name" value="CHP00048"/>
    <property type="match status" value="1"/>
</dbReference>
<dbReference type="SFLD" id="SFLDF00275">
    <property type="entry name" value="adenosine_C2_methyltransferase"/>
    <property type="match status" value="1"/>
</dbReference>
<dbReference type="SFLD" id="SFLDS00029">
    <property type="entry name" value="Radical_SAM"/>
    <property type="match status" value="1"/>
</dbReference>
<dbReference type="SUPFAM" id="SSF102114">
    <property type="entry name" value="Radical SAM enzymes"/>
    <property type="match status" value="1"/>
</dbReference>
<dbReference type="PROSITE" id="PS51918">
    <property type="entry name" value="RADICAL_SAM"/>
    <property type="match status" value="1"/>
</dbReference>
<reference key="1">
    <citation type="journal article" date="2007" name="J. Bacteriol.">
        <title>The complete genome sequence of Roseobacter denitrificans reveals a mixotrophic rather than photosynthetic metabolism.</title>
        <authorList>
            <person name="Swingley W.D."/>
            <person name="Sadekar S."/>
            <person name="Mastrian S.D."/>
            <person name="Matthies H.J."/>
            <person name="Hao J."/>
            <person name="Ramos H."/>
            <person name="Acharya C.R."/>
            <person name="Conrad A.L."/>
            <person name="Taylor H.L."/>
            <person name="Dejesa L.C."/>
            <person name="Shah M.K."/>
            <person name="O'Huallachain M.E."/>
            <person name="Lince M.T."/>
            <person name="Blankenship R.E."/>
            <person name="Beatty J.T."/>
            <person name="Touchman J.W."/>
        </authorList>
    </citation>
    <scope>NUCLEOTIDE SEQUENCE [LARGE SCALE GENOMIC DNA]</scope>
    <source>
        <strain>ATCC 33942 / OCh 114</strain>
    </source>
</reference>
<sequence>MPANAPITQDVHTIPRKLPDGPVNLVGLTRAAMRDALIAEGTPEKQAKMRVGQIWQWIYQWGVRDFDLMTNLSKAYRAQLKEKFVVEVPEVVTRQVSEDGTRKYLVRIAGGHEVEVVYIPDEGRGTLCVSSQVGCTLTCSFCHTGTQKLVRNLTAAEIIGQVMVARDDLGEWPEIGAPKDETRLLSNIVLMGMGEPLYNFENVRDAMKIAMDPEGIQLSRRRITLSTSGVVPEIARTAVEIGCQLAVSFHATTDDVRDTLVPINKRWNIEVLLEALRAYPKVSNSERITFEYVMLHGVNDSDEDARRLVKLIDGIPAKINLIPFNEWPGAPYKRSSNNRIRAFADIIYKAGYASPIRTPRGEDIMAACGQLKSATERARKSRKQIAAETGLAGA</sequence>